<feature type="chain" id="PRO_0000411790" description="Probable Xaa-Pro aminopeptidase P">
    <location>
        <begin position="1"/>
        <end position="622"/>
    </location>
</feature>
<feature type="binding site" evidence="1">
    <location>
        <position position="419"/>
    </location>
    <ligand>
        <name>Mn(2+)</name>
        <dbReference type="ChEBI" id="CHEBI:29035"/>
        <label>2</label>
    </ligand>
</feature>
<feature type="binding site" evidence="1">
    <location>
        <position position="430"/>
    </location>
    <ligand>
        <name>Mn(2+)</name>
        <dbReference type="ChEBI" id="CHEBI:29035"/>
        <label>1</label>
    </ligand>
</feature>
<feature type="binding site" evidence="1">
    <location>
        <position position="430"/>
    </location>
    <ligand>
        <name>Mn(2+)</name>
        <dbReference type="ChEBI" id="CHEBI:29035"/>
        <label>2</label>
    </ligand>
</feature>
<feature type="binding site" evidence="1">
    <location>
        <position position="528"/>
    </location>
    <ligand>
        <name>Mn(2+)</name>
        <dbReference type="ChEBI" id="CHEBI:29035"/>
        <label>1</label>
    </ligand>
</feature>
<feature type="binding site" evidence="1">
    <location>
        <position position="542"/>
    </location>
    <ligand>
        <name>Mn(2+)</name>
        <dbReference type="ChEBI" id="CHEBI:29035"/>
        <label>1</label>
    </ligand>
</feature>
<feature type="binding site" evidence="1">
    <location>
        <position position="542"/>
    </location>
    <ligand>
        <name>Mn(2+)</name>
        <dbReference type="ChEBI" id="CHEBI:29035"/>
        <label>2</label>
    </ligand>
</feature>
<evidence type="ECO:0000250" key="1"/>
<evidence type="ECO:0000305" key="2"/>
<comment type="function">
    <text evidence="1">Catalyzes the removal of a penultimate prolyl residue from the N-termini of peptides.</text>
</comment>
<comment type="catalytic activity">
    <reaction>
        <text>Release of any N-terminal amino acid, including proline, that is linked to proline, even from a dipeptide or tripeptide.</text>
        <dbReference type="EC" id="3.4.11.9"/>
    </reaction>
</comment>
<comment type="cofactor">
    <cofactor evidence="1">
        <name>Mn(2+)</name>
        <dbReference type="ChEBI" id="CHEBI:29035"/>
    </cofactor>
    <text evidence="1">Binds 2 manganese ions per subunit.</text>
</comment>
<comment type="similarity">
    <text evidence="2">Belongs to the peptidase M24B family.</text>
</comment>
<reference key="1">
    <citation type="journal article" date="2010" name="Proc. Natl. Acad. Sci. U.S.A.">
        <title>Insights into evolution of multicellular fungi from the assembled chromosomes of the mushroom Coprinopsis cinerea (Coprinus cinereus).</title>
        <authorList>
            <person name="Stajich J.E."/>
            <person name="Wilke S.K."/>
            <person name="Ahren D."/>
            <person name="Au C.H."/>
            <person name="Birren B.W."/>
            <person name="Borodovsky M."/>
            <person name="Burns C."/>
            <person name="Canbaeck B."/>
            <person name="Casselton L.A."/>
            <person name="Cheng C.K."/>
            <person name="Deng J."/>
            <person name="Dietrich F.S."/>
            <person name="Fargo D.C."/>
            <person name="Farman M.L."/>
            <person name="Gathman A.C."/>
            <person name="Goldberg J."/>
            <person name="Guigo R."/>
            <person name="Hoegger P.J."/>
            <person name="Hooker J.B."/>
            <person name="Huggins A."/>
            <person name="James T.Y."/>
            <person name="Kamada T."/>
            <person name="Kilaru S."/>
            <person name="Kodira C."/>
            <person name="Kuees U."/>
            <person name="Kupfer D."/>
            <person name="Kwan H.S."/>
            <person name="Lomsadze A."/>
            <person name="Li W."/>
            <person name="Lilly W.W."/>
            <person name="Ma L.-J."/>
            <person name="Mackey A.J."/>
            <person name="Manning G."/>
            <person name="Martin F."/>
            <person name="Muraguchi H."/>
            <person name="Natvig D.O."/>
            <person name="Palmerini H."/>
            <person name="Ramesh M.A."/>
            <person name="Rehmeyer C.J."/>
            <person name="Roe B.A."/>
            <person name="Shenoy N."/>
            <person name="Stanke M."/>
            <person name="Ter-Hovhannisyan V."/>
            <person name="Tunlid A."/>
            <person name="Velagapudi R."/>
            <person name="Vision T.J."/>
            <person name="Zeng Q."/>
            <person name="Zolan M.E."/>
            <person name="Pukkila P.J."/>
        </authorList>
    </citation>
    <scope>NUCLEOTIDE SEQUENCE [LARGE SCALE GENOMIC DNA]</scope>
    <source>
        <strain>Okayama-7 / 130 / ATCC MYA-4618 / FGSC 9003</strain>
    </source>
</reference>
<proteinExistence type="inferred from homology"/>
<dbReference type="EC" id="3.4.11.9"/>
<dbReference type="EMBL" id="AACS02000011">
    <property type="protein sequence ID" value="EAU82877.1"/>
    <property type="molecule type" value="Genomic_DNA"/>
</dbReference>
<dbReference type="RefSeq" id="XP_001838946.1">
    <property type="nucleotide sequence ID" value="XM_001838894.1"/>
</dbReference>
<dbReference type="SMR" id="A8P5H7"/>
<dbReference type="FunCoup" id="A8P5H7">
    <property type="interactions" value="390"/>
</dbReference>
<dbReference type="STRING" id="240176.A8P5H7"/>
<dbReference type="GeneID" id="6015541"/>
<dbReference type="KEGG" id="cci:CC1G_05499"/>
<dbReference type="VEuPathDB" id="FungiDB:CC1G_05499"/>
<dbReference type="eggNOG" id="KOG2413">
    <property type="taxonomic scope" value="Eukaryota"/>
</dbReference>
<dbReference type="HOGENOM" id="CLU_011781_2_3_1"/>
<dbReference type="InParanoid" id="A8P5H7"/>
<dbReference type="OMA" id="EPGMILS"/>
<dbReference type="OrthoDB" id="9995434at2759"/>
<dbReference type="Proteomes" id="UP000001861">
    <property type="component" value="Unassembled WGS sequence"/>
</dbReference>
<dbReference type="GO" id="GO:0005737">
    <property type="term" value="C:cytoplasm"/>
    <property type="evidence" value="ECO:0007669"/>
    <property type="project" value="UniProtKB-ARBA"/>
</dbReference>
<dbReference type="GO" id="GO:0046872">
    <property type="term" value="F:metal ion binding"/>
    <property type="evidence" value="ECO:0007669"/>
    <property type="project" value="UniProtKB-KW"/>
</dbReference>
<dbReference type="GO" id="GO:0070006">
    <property type="term" value="F:metalloaminopeptidase activity"/>
    <property type="evidence" value="ECO:0007669"/>
    <property type="project" value="InterPro"/>
</dbReference>
<dbReference type="GO" id="GO:0006508">
    <property type="term" value="P:proteolysis"/>
    <property type="evidence" value="ECO:0007669"/>
    <property type="project" value="UniProtKB-KW"/>
</dbReference>
<dbReference type="CDD" id="cd01085">
    <property type="entry name" value="APP"/>
    <property type="match status" value="1"/>
</dbReference>
<dbReference type="FunFam" id="3.90.230.10:FF:000007">
    <property type="entry name" value="Xaa-Pro aminopeptidase P"/>
    <property type="match status" value="1"/>
</dbReference>
<dbReference type="FunFam" id="3.40.350.10:FF:000003">
    <property type="entry name" value="Xaa-pro aminopeptidase P"/>
    <property type="match status" value="1"/>
</dbReference>
<dbReference type="Gene3D" id="3.90.230.10">
    <property type="entry name" value="Creatinase/methionine aminopeptidase superfamily"/>
    <property type="match status" value="1"/>
</dbReference>
<dbReference type="Gene3D" id="3.40.350.10">
    <property type="entry name" value="Creatinase/prolidase N-terminal domain"/>
    <property type="match status" value="2"/>
</dbReference>
<dbReference type="InterPro" id="IPR029149">
    <property type="entry name" value="Creatin/AminoP/Spt16_N"/>
</dbReference>
<dbReference type="InterPro" id="IPR036005">
    <property type="entry name" value="Creatinase/aminopeptidase-like"/>
</dbReference>
<dbReference type="InterPro" id="IPR000587">
    <property type="entry name" value="Creatinase_N"/>
</dbReference>
<dbReference type="InterPro" id="IPR000994">
    <property type="entry name" value="Pept_M24"/>
</dbReference>
<dbReference type="InterPro" id="IPR033740">
    <property type="entry name" value="Pept_M24B"/>
</dbReference>
<dbReference type="InterPro" id="IPR032416">
    <property type="entry name" value="Peptidase_M24_C"/>
</dbReference>
<dbReference type="InterPro" id="IPR050422">
    <property type="entry name" value="X-Pro_aminopeptidase_P"/>
</dbReference>
<dbReference type="PANTHER" id="PTHR43763">
    <property type="entry name" value="XAA-PRO AMINOPEPTIDASE 1"/>
    <property type="match status" value="1"/>
</dbReference>
<dbReference type="PANTHER" id="PTHR43763:SF6">
    <property type="entry name" value="XAA-PRO AMINOPEPTIDASE 1"/>
    <property type="match status" value="1"/>
</dbReference>
<dbReference type="Pfam" id="PF01321">
    <property type="entry name" value="Creatinase_N"/>
    <property type="match status" value="1"/>
</dbReference>
<dbReference type="Pfam" id="PF16189">
    <property type="entry name" value="Creatinase_N_2"/>
    <property type="match status" value="1"/>
</dbReference>
<dbReference type="Pfam" id="PF00557">
    <property type="entry name" value="Peptidase_M24"/>
    <property type="match status" value="1"/>
</dbReference>
<dbReference type="Pfam" id="PF16188">
    <property type="entry name" value="Peptidase_M24_C"/>
    <property type="match status" value="1"/>
</dbReference>
<dbReference type="SUPFAM" id="SSF55920">
    <property type="entry name" value="Creatinase/aminopeptidase"/>
    <property type="match status" value="1"/>
</dbReference>
<dbReference type="SUPFAM" id="SSF53092">
    <property type="entry name" value="Creatinase/prolidase N-terminal domain"/>
    <property type="match status" value="2"/>
</dbReference>
<protein>
    <recommendedName>
        <fullName>Probable Xaa-Pro aminopeptidase P</fullName>
        <shortName>AMPP</shortName>
        <shortName>Aminopeptidase P</shortName>
        <ecNumber>3.4.11.9</ecNumber>
    </recommendedName>
    <alternativeName>
        <fullName>Aminoacylproline aminopeptidase</fullName>
    </alternativeName>
    <alternativeName>
        <fullName>Prolidase</fullName>
    </alternativeName>
</protein>
<keyword id="KW-0031">Aminopeptidase</keyword>
<keyword id="KW-0378">Hydrolase</keyword>
<keyword id="KW-0464">Manganese</keyword>
<keyword id="KW-0479">Metal-binding</keyword>
<keyword id="KW-0482">Metalloprotease</keyword>
<keyword id="KW-0645">Protease</keyword>
<keyword id="KW-1185">Reference proteome</keyword>
<sequence length="622" mass="69966">MGARGNHTVDTSKQLAALRELMKKENVDVWVVPSEDQHYSEYLAHCDERRAFISGFNGSAGCAVITLDKAYLFTDGRYFLQAEKQLDSNWTLMKQGLPDVPTWQDFLHKTLDGSLKIGIDATIITEEDAAGLRKNLAPKKSELVPSKKNLVDIVWGSERPARPQNPVFHLDEKYSGQSFKEKVKKVREEIAKEKGKAFVVTMLDEVAWLFNLRGSDIDYNPVFFAYAVVTPDEVVLFINEKQLDDAARDYLGQDVKIRGYDELYDYLKELPKSLSLTGDKDGEKILVTSRTSLAITETITPPSSPESTTFHKVVRSPVGDLKAIKNAVEIEGFRQCHIRDGAALARYFAWLEEALNEGKEVSEYAGAEVLEKYRSELDLFRGLSFTTISSTGPNGAIIHYSPDPQDCAIIKKDQVYLCDSGAQFSDGTTDVTRTWHFGTPRPEEVRAFTRVLQGHIAIDTAVFPNGTTGYLIDSWARRSLWQDGLDYRHGTGHGVGHFLNVHEGPQGIGVRIAYNNTALKAGMTVSNEPGYYEDGQYGIRIENIVIVKEVKLPNNFGDKGYLGFEHVTMCPIQTKLIDASLLTEPEKKWVNDYHQEVWQKVSPLLQNDKRALEWLKRETTPI</sequence>
<accession>A8P5H7</accession>
<organism>
    <name type="scientific">Coprinopsis cinerea (strain Okayama-7 / 130 / ATCC MYA-4618 / FGSC 9003)</name>
    <name type="common">Inky cap fungus</name>
    <name type="synonym">Hormographiella aspergillata</name>
    <dbReference type="NCBI Taxonomy" id="240176"/>
    <lineage>
        <taxon>Eukaryota</taxon>
        <taxon>Fungi</taxon>
        <taxon>Dikarya</taxon>
        <taxon>Basidiomycota</taxon>
        <taxon>Agaricomycotina</taxon>
        <taxon>Agaricomycetes</taxon>
        <taxon>Agaricomycetidae</taxon>
        <taxon>Agaricales</taxon>
        <taxon>Agaricineae</taxon>
        <taxon>Psathyrellaceae</taxon>
        <taxon>Coprinopsis</taxon>
    </lineage>
</organism>
<gene>
    <name type="primary">AMPP</name>
    <name type="ORF">CC1G_05499</name>
</gene>
<name>AMPP1_COPC7</name>